<organism>
    <name type="scientific">Danio rerio</name>
    <name type="common">Zebrafish</name>
    <name type="synonym">Brachydanio rerio</name>
    <dbReference type="NCBI Taxonomy" id="7955"/>
    <lineage>
        <taxon>Eukaryota</taxon>
        <taxon>Metazoa</taxon>
        <taxon>Chordata</taxon>
        <taxon>Craniata</taxon>
        <taxon>Vertebrata</taxon>
        <taxon>Euteleostomi</taxon>
        <taxon>Actinopterygii</taxon>
        <taxon>Neopterygii</taxon>
        <taxon>Teleostei</taxon>
        <taxon>Ostariophysi</taxon>
        <taxon>Cypriniformes</taxon>
        <taxon>Danionidae</taxon>
        <taxon>Danioninae</taxon>
        <taxon>Danio</taxon>
    </lineage>
</organism>
<reference key="1">
    <citation type="journal article" date="2013" name="Nature">
        <title>The zebrafish reference genome sequence and its relationship to the human genome.</title>
        <authorList>
            <person name="Howe K."/>
            <person name="Clark M.D."/>
            <person name="Torroja C.F."/>
            <person name="Torrance J."/>
            <person name="Berthelot C."/>
            <person name="Muffato M."/>
            <person name="Collins J.E."/>
            <person name="Humphray S."/>
            <person name="McLaren K."/>
            <person name="Matthews L."/>
            <person name="McLaren S."/>
            <person name="Sealy I."/>
            <person name="Caccamo M."/>
            <person name="Churcher C."/>
            <person name="Scott C."/>
            <person name="Barrett J.C."/>
            <person name="Koch R."/>
            <person name="Rauch G.J."/>
            <person name="White S."/>
            <person name="Chow W."/>
            <person name="Kilian B."/>
            <person name="Quintais L.T."/>
            <person name="Guerra-Assuncao J.A."/>
            <person name="Zhou Y."/>
            <person name="Gu Y."/>
            <person name="Yen J."/>
            <person name="Vogel J.H."/>
            <person name="Eyre T."/>
            <person name="Redmond S."/>
            <person name="Banerjee R."/>
            <person name="Chi J."/>
            <person name="Fu B."/>
            <person name="Langley E."/>
            <person name="Maguire S.F."/>
            <person name="Laird G.K."/>
            <person name="Lloyd D."/>
            <person name="Kenyon E."/>
            <person name="Donaldson S."/>
            <person name="Sehra H."/>
            <person name="Almeida-King J."/>
            <person name="Loveland J."/>
            <person name="Trevanion S."/>
            <person name="Jones M."/>
            <person name="Quail M."/>
            <person name="Willey D."/>
            <person name="Hunt A."/>
            <person name="Burton J."/>
            <person name="Sims S."/>
            <person name="McLay K."/>
            <person name="Plumb B."/>
            <person name="Davis J."/>
            <person name="Clee C."/>
            <person name="Oliver K."/>
            <person name="Clark R."/>
            <person name="Riddle C."/>
            <person name="Elliot D."/>
            <person name="Threadgold G."/>
            <person name="Harden G."/>
            <person name="Ware D."/>
            <person name="Begum S."/>
            <person name="Mortimore B."/>
            <person name="Kerry G."/>
            <person name="Heath P."/>
            <person name="Phillimore B."/>
            <person name="Tracey A."/>
            <person name="Corby N."/>
            <person name="Dunn M."/>
            <person name="Johnson C."/>
            <person name="Wood J."/>
            <person name="Clark S."/>
            <person name="Pelan S."/>
            <person name="Griffiths G."/>
            <person name="Smith M."/>
            <person name="Glithero R."/>
            <person name="Howden P."/>
            <person name="Barker N."/>
            <person name="Lloyd C."/>
            <person name="Stevens C."/>
            <person name="Harley J."/>
            <person name="Holt K."/>
            <person name="Panagiotidis G."/>
            <person name="Lovell J."/>
            <person name="Beasley H."/>
            <person name="Henderson C."/>
            <person name="Gordon D."/>
            <person name="Auger K."/>
            <person name="Wright D."/>
            <person name="Collins J."/>
            <person name="Raisen C."/>
            <person name="Dyer L."/>
            <person name="Leung K."/>
            <person name="Robertson L."/>
            <person name="Ambridge K."/>
            <person name="Leongamornlert D."/>
            <person name="McGuire S."/>
            <person name="Gilderthorp R."/>
            <person name="Griffiths C."/>
            <person name="Manthravadi D."/>
            <person name="Nichol S."/>
            <person name="Barker G."/>
            <person name="Whitehead S."/>
            <person name="Kay M."/>
            <person name="Brown J."/>
            <person name="Murnane C."/>
            <person name="Gray E."/>
            <person name="Humphries M."/>
            <person name="Sycamore N."/>
            <person name="Barker D."/>
            <person name="Saunders D."/>
            <person name="Wallis J."/>
            <person name="Babbage A."/>
            <person name="Hammond S."/>
            <person name="Mashreghi-Mohammadi M."/>
            <person name="Barr L."/>
            <person name="Martin S."/>
            <person name="Wray P."/>
            <person name="Ellington A."/>
            <person name="Matthews N."/>
            <person name="Ellwood M."/>
            <person name="Woodmansey R."/>
            <person name="Clark G."/>
            <person name="Cooper J."/>
            <person name="Tromans A."/>
            <person name="Grafham D."/>
            <person name="Skuce C."/>
            <person name="Pandian R."/>
            <person name="Andrews R."/>
            <person name="Harrison E."/>
            <person name="Kimberley A."/>
            <person name="Garnett J."/>
            <person name="Fosker N."/>
            <person name="Hall R."/>
            <person name="Garner P."/>
            <person name="Kelly D."/>
            <person name="Bird C."/>
            <person name="Palmer S."/>
            <person name="Gehring I."/>
            <person name="Berger A."/>
            <person name="Dooley C.M."/>
            <person name="Ersan-Urun Z."/>
            <person name="Eser C."/>
            <person name="Geiger H."/>
            <person name="Geisler M."/>
            <person name="Karotki L."/>
            <person name="Kirn A."/>
            <person name="Konantz J."/>
            <person name="Konantz M."/>
            <person name="Oberlander M."/>
            <person name="Rudolph-Geiger S."/>
            <person name="Teucke M."/>
            <person name="Lanz C."/>
            <person name="Raddatz G."/>
            <person name="Osoegawa K."/>
            <person name="Zhu B."/>
            <person name="Rapp A."/>
            <person name="Widaa S."/>
            <person name="Langford C."/>
            <person name="Yang F."/>
            <person name="Schuster S.C."/>
            <person name="Carter N.P."/>
            <person name="Harrow J."/>
            <person name="Ning Z."/>
            <person name="Herrero J."/>
            <person name="Searle S.M."/>
            <person name="Enright A."/>
            <person name="Geisler R."/>
            <person name="Plasterk R.H."/>
            <person name="Lee C."/>
            <person name="Westerfield M."/>
            <person name="de Jong P.J."/>
            <person name="Zon L.I."/>
            <person name="Postlethwait J.H."/>
            <person name="Nusslein-Volhard C."/>
            <person name="Hubbard T.J."/>
            <person name="Roest Crollius H."/>
            <person name="Rogers J."/>
            <person name="Stemple D.L."/>
        </authorList>
    </citation>
    <scope>NUCLEOTIDE SEQUENCE [LARGE SCALE GENOMIC DNA]</scope>
    <source>
        <strain>Tuebingen</strain>
    </source>
</reference>
<reference key="2">
    <citation type="submission" date="2007-09" db="EMBL/GenBank/DDBJ databases">
        <authorList>
            <consortium name="NIH - Zebrafish Gene Collection (ZGC) project"/>
        </authorList>
    </citation>
    <scope>NUCLEOTIDE SEQUENCE [LARGE SCALE MRNA]</scope>
    <source>
        <tissue>Skin</tissue>
    </source>
</reference>
<reference key="3">
    <citation type="journal article" date="2015" name="Neurotoxicol. Teratol.">
        <title>2-Bromopalmitate impairs neural stem/progenitor cell proliferation, promotes cell apoptosis and induces malformation in zebrafish embryonic brain.</title>
        <authorList>
            <person name="Wang C."/>
            <person name="Chen X."/>
            <person name="Shi W."/>
            <person name="Wang F."/>
            <person name="Du Z."/>
            <person name="Li X."/>
            <person name="Yao Y."/>
            <person name="Liu T."/>
            <person name="Shao T."/>
            <person name="Li G."/>
            <person name="Hao A."/>
        </authorList>
    </citation>
    <scope>DEVELOPMENTAL STAGE</scope>
</reference>
<reference key="4">
    <citation type="journal article" date="2016" name="Biochem. Biophys. Res. Commun.">
        <title>Protein palmitoylation activate zygotic gene expression during the maternal-to-zygotic transition.</title>
        <authorList>
            <person name="Du Z."/>
            <person name="Chen X."/>
            <person name="Li X."/>
            <person name="He K."/>
            <person name="Ji S."/>
            <person name="Shi W."/>
            <person name="Hao A."/>
        </authorList>
    </citation>
    <scope>DEVELOPMENTAL STAGE</scope>
</reference>
<gene>
    <name evidence="8 10" type="primary">zdhhc24</name>
    <name evidence="7" type="synonym">dhhc24</name>
</gene>
<comment type="function">
    <text evidence="9">Probable palmitoyltransferase that could catalyze the addition of palmitate onto various protein substrates.</text>
</comment>
<comment type="catalytic activity">
    <reaction evidence="9">
        <text>L-cysteinyl-[protein] + hexadecanoyl-CoA = S-hexadecanoyl-L-cysteinyl-[protein] + CoA</text>
        <dbReference type="Rhea" id="RHEA:36683"/>
        <dbReference type="Rhea" id="RHEA-COMP:10131"/>
        <dbReference type="Rhea" id="RHEA-COMP:11032"/>
        <dbReference type="ChEBI" id="CHEBI:29950"/>
        <dbReference type="ChEBI" id="CHEBI:57287"/>
        <dbReference type="ChEBI" id="CHEBI:57379"/>
        <dbReference type="ChEBI" id="CHEBI:74151"/>
        <dbReference type="EC" id="2.3.1.225"/>
    </reaction>
    <physiologicalReaction direction="left-to-right" evidence="9">
        <dbReference type="Rhea" id="RHEA:36684"/>
    </physiologicalReaction>
</comment>
<comment type="subcellular location">
    <subcellularLocation>
        <location evidence="3">Membrane</location>
        <topology evidence="3">Multi-pass membrane protein</topology>
    </subcellularLocation>
</comment>
<comment type="developmental stage">
    <text evidence="5 6">Probably maternally supplied, the zygotic expression becomes significant at 2.75 hpf and remains constant until 24 hpf.</text>
</comment>
<comment type="domain">
    <text evidence="2">The DHHC domain is required for palmitoyltransferase activity.</text>
</comment>
<comment type="similarity">
    <text evidence="9">Belongs to the DHHC palmitoyltransferase family.</text>
</comment>
<dbReference type="EC" id="2.3.1.225" evidence="1"/>
<dbReference type="EMBL" id="FP016208">
    <property type="status" value="NOT_ANNOTATED_CDS"/>
    <property type="molecule type" value="Genomic_DNA"/>
</dbReference>
<dbReference type="EMBL" id="BC152631">
    <property type="protein sequence ID" value="AAI52632.1"/>
    <property type="molecule type" value="mRNA"/>
</dbReference>
<dbReference type="SMR" id="F1QGD2"/>
<dbReference type="FunCoup" id="F1QGD2">
    <property type="interactions" value="828"/>
</dbReference>
<dbReference type="STRING" id="7955.ENSDARP00000132373"/>
<dbReference type="PaxDb" id="7955-ENSDARP00000097146"/>
<dbReference type="Ensembl" id="ENSDART00000168546">
    <property type="protein sequence ID" value="ENSDARP00000132373"/>
    <property type="gene ID" value="ENSDARG00000105134"/>
</dbReference>
<dbReference type="Ensembl" id="ENSDART00000189778">
    <property type="protein sequence ID" value="ENSDARP00000153443"/>
    <property type="gene ID" value="ENSDARG00000105134"/>
</dbReference>
<dbReference type="AGR" id="ZFIN:ZDB-GENE-040718-8"/>
<dbReference type="ZFIN" id="ZDB-GENE-040718-8">
    <property type="gene designation" value="zdhhc24"/>
</dbReference>
<dbReference type="eggNOG" id="KOG1311">
    <property type="taxonomic scope" value="Eukaryota"/>
</dbReference>
<dbReference type="HOGENOM" id="CLU_027721_5_2_1"/>
<dbReference type="InParanoid" id="F1QGD2"/>
<dbReference type="OMA" id="RMHLTWL"/>
<dbReference type="PhylomeDB" id="F1QGD2"/>
<dbReference type="TreeFam" id="TF319523"/>
<dbReference type="PRO" id="PR:F1QGD2"/>
<dbReference type="Proteomes" id="UP000000437">
    <property type="component" value="Unplaced"/>
</dbReference>
<dbReference type="Bgee" id="ENSDARG00000105134">
    <property type="expression patterns" value="Expressed in early embryo and 23 other cell types or tissues"/>
</dbReference>
<dbReference type="GO" id="GO:0005783">
    <property type="term" value="C:endoplasmic reticulum"/>
    <property type="evidence" value="ECO:0000318"/>
    <property type="project" value="GO_Central"/>
</dbReference>
<dbReference type="GO" id="GO:0005794">
    <property type="term" value="C:Golgi apparatus"/>
    <property type="evidence" value="ECO:0000318"/>
    <property type="project" value="GO_Central"/>
</dbReference>
<dbReference type="GO" id="GO:0016020">
    <property type="term" value="C:membrane"/>
    <property type="evidence" value="ECO:0007669"/>
    <property type="project" value="UniProtKB-SubCell"/>
</dbReference>
<dbReference type="GO" id="GO:0019706">
    <property type="term" value="F:protein-cysteine S-palmitoyltransferase activity"/>
    <property type="evidence" value="ECO:0000318"/>
    <property type="project" value="GO_Central"/>
</dbReference>
<dbReference type="GO" id="GO:0006612">
    <property type="term" value="P:protein targeting to membrane"/>
    <property type="evidence" value="ECO:0000318"/>
    <property type="project" value="GO_Central"/>
</dbReference>
<dbReference type="InterPro" id="IPR001594">
    <property type="entry name" value="Palmitoyltrfase_DHHC"/>
</dbReference>
<dbReference type="InterPro" id="IPR039859">
    <property type="entry name" value="PFA4/ZDH16/20/ERF2-like"/>
</dbReference>
<dbReference type="PANTHER" id="PTHR12246">
    <property type="entry name" value="PALMITOYLTRANSFERASE ZDHHC16"/>
    <property type="match status" value="1"/>
</dbReference>
<dbReference type="Pfam" id="PF01529">
    <property type="entry name" value="DHHC"/>
    <property type="match status" value="1"/>
</dbReference>
<dbReference type="PROSITE" id="PS50216">
    <property type="entry name" value="DHHC"/>
    <property type="match status" value="1"/>
</dbReference>
<protein>
    <recommendedName>
        <fullName>Probable palmitoyltransferase ZDHHC24</fullName>
        <ecNumber evidence="1">2.3.1.225</ecNumber>
    </recommendedName>
    <alternativeName>
        <fullName evidence="7">DHHC domain-containing cysteine-rich protein 24</fullName>
    </alternativeName>
    <alternativeName>
        <fullName evidence="8 10">Zinc finger DHHC domain-containing protein 24</fullName>
    </alternativeName>
</protein>
<proteinExistence type="evidence at transcript level"/>
<sequence>MTSFMSRVWCKVESTGRQLPIVLNAVLVFSITAEVSYLVLVEAPFEPEQKKTDWSTIWTGLHLFAQYFMLGNITWNASLFVKTNPSIRGVFLGGDTLGQGWRYCYNCETHTPPRCSHCYDCNVCVLRRDHHCVFFGQCVGFHNYRYFLTCLLFMWAGLLYAVVMNAEVFIFILKEGVTFHSVMLLLVPWIMLVSGQVTTRAFAFAFIADTCVVGFLLVAAFLFFHVALMLRGQTTREWYSTRRPYSLGTMANIRECLGKNWYFCWLCPLIPSPLPGDGINFKVTASLEPKKQAVH</sequence>
<accession>F1QGD2</accession>
<accession>A7YYE7</accession>
<evidence type="ECO:0000250" key="1">
    <source>
        <dbReference type="UniProtKB" id="Q6UX98"/>
    </source>
</evidence>
<evidence type="ECO:0000250" key="2">
    <source>
        <dbReference type="UniProtKB" id="Q8IUH5"/>
    </source>
</evidence>
<evidence type="ECO:0000255" key="3"/>
<evidence type="ECO:0000255" key="4">
    <source>
        <dbReference type="PROSITE-ProRule" id="PRU00067"/>
    </source>
</evidence>
<evidence type="ECO:0000269" key="5">
    <source>
    </source>
</evidence>
<evidence type="ECO:0000269" key="6">
    <source>
    </source>
</evidence>
<evidence type="ECO:0000303" key="7">
    <source>
    </source>
</evidence>
<evidence type="ECO:0000303" key="8">
    <source>
    </source>
</evidence>
<evidence type="ECO:0000305" key="9"/>
<evidence type="ECO:0000312" key="10">
    <source>
        <dbReference type="ZFIN" id="ZDB-GENE-040718-8"/>
    </source>
</evidence>
<feature type="chain" id="PRO_0000451132" description="Probable palmitoyltransferase ZDHHC24">
    <location>
        <begin position="1"/>
        <end position="295"/>
    </location>
</feature>
<feature type="topological domain" description="Cytoplasmic" evidence="9">
    <location>
        <begin position="1"/>
        <end position="20"/>
    </location>
</feature>
<feature type="transmembrane region" description="Helical" evidence="3">
    <location>
        <begin position="21"/>
        <end position="41"/>
    </location>
</feature>
<feature type="topological domain" description="Extracellular" evidence="9">
    <location>
        <begin position="42"/>
        <end position="60"/>
    </location>
</feature>
<feature type="transmembrane region" description="Helical" evidence="3">
    <location>
        <begin position="61"/>
        <end position="81"/>
    </location>
</feature>
<feature type="topological domain" description="Cytoplasmic" evidence="9">
    <location>
        <begin position="82"/>
        <end position="151"/>
    </location>
</feature>
<feature type="transmembrane region" description="Helical" evidence="3">
    <location>
        <begin position="152"/>
        <end position="172"/>
    </location>
</feature>
<feature type="topological domain" description="Extracellular" evidence="9">
    <location>
        <begin position="173"/>
        <end position="176"/>
    </location>
</feature>
<feature type="transmembrane region" description="Helical" evidence="3">
    <location>
        <begin position="177"/>
        <end position="197"/>
    </location>
</feature>
<feature type="topological domain" description="Cytoplasmic" evidence="9">
    <location>
        <begin position="198"/>
        <end position="203"/>
    </location>
</feature>
<feature type="transmembrane region" description="Helical" evidence="3">
    <location>
        <begin position="204"/>
        <end position="224"/>
    </location>
</feature>
<feature type="topological domain" description="Extracellular" evidence="9">
    <location>
        <begin position="225"/>
        <end position="295"/>
    </location>
</feature>
<feature type="domain" description="DHHC" evidence="4">
    <location>
        <begin position="102"/>
        <end position="152"/>
    </location>
</feature>
<feature type="active site" description="S-palmitoyl cysteine intermediate" evidence="4">
    <location>
        <position position="132"/>
    </location>
</feature>
<feature type="sequence conflict" description="In Ref. 2; AAI52632." evidence="9" ref="2">
    <original>T</original>
    <variation>S</variation>
    <location>
        <position position="52"/>
    </location>
</feature>
<feature type="sequence conflict" description="In Ref. 2; AAI52632." evidence="9" ref="2">
    <original>S</original>
    <variation>P</variation>
    <location>
        <position position="78"/>
    </location>
</feature>
<feature type="sequence conflict" description="In Ref. 2; AAI52632." evidence="9" ref="2">
    <original>V</original>
    <variation>I</variation>
    <location>
        <position position="212"/>
    </location>
</feature>
<name>ZDH24_DANRE</name>
<keyword id="KW-0012">Acyltransferase</keyword>
<keyword id="KW-0449">Lipoprotein</keyword>
<keyword id="KW-0472">Membrane</keyword>
<keyword id="KW-0564">Palmitate</keyword>
<keyword id="KW-1185">Reference proteome</keyword>
<keyword id="KW-0808">Transferase</keyword>
<keyword id="KW-0812">Transmembrane</keyword>
<keyword id="KW-1133">Transmembrane helix</keyword>